<gene>
    <name evidence="1" type="primary">rplN</name>
    <name type="ordered locus">LHK_00263</name>
</gene>
<sequence>MIQMQTQLEVADNTGARRVMCIKVLGGSKRRYATVGDIIKVSIKDAAPRGRVKKGDVYNAVVVRTAKGVRRPDGSLIKFDGNAAVLLNNKLEPIGTRIFGPVTRELRTERFMKIVSLAPEVL</sequence>
<protein>
    <recommendedName>
        <fullName evidence="1">Large ribosomal subunit protein uL14</fullName>
    </recommendedName>
    <alternativeName>
        <fullName evidence="2">50S ribosomal protein L14</fullName>
    </alternativeName>
</protein>
<organism>
    <name type="scientific">Laribacter hongkongensis (strain HLHK9)</name>
    <dbReference type="NCBI Taxonomy" id="557598"/>
    <lineage>
        <taxon>Bacteria</taxon>
        <taxon>Pseudomonadati</taxon>
        <taxon>Pseudomonadota</taxon>
        <taxon>Betaproteobacteria</taxon>
        <taxon>Neisseriales</taxon>
        <taxon>Aquaspirillaceae</taxon>
        <taxon>Laribacter</taxon>
    </lineage>
</organism>
<reference key="1">
    <citation type="journal article" date="2009" name="PLoS Genet.">
        <title>The complete genome and proteome of Laribacter hongkongensis reveal potential mechanisms for adaptations to different temperatures and habitats.</title>
        <authorList>
            <person name="Woo P.C.Y."/>
            <person name="Lau S.K.P."/>
            <person name="Tse H."/>
            <person name="Teng J.L.L."/>
            <person name="Curreem S.O."/>
            <person name="Tsang A.K.L."/>
            <person name="Fan R.Y.Y."/>
            <person name="Wong G.K.M."/>
            <person name="Huang Y."/>
            <person name="Loman N.J."/>
            <person name="Snyder L.A.S."/>
            <person name="Cai J.J."/>
            <person name="Huang J.-D."/>
            <person name="Mak W."/>
            <person name="Pallen M.J."/>
            <person name="Lok S."/>
            <person name="Yuen K.-Y."/>
        </authorList>
    </citation>
    <scope>NUCLEOTIDE SEQUENCE [LARGE SCALE GENOMIC DNA]</scope>
    <source>
        <strain>HLHK9</strain>
    </source>
</reference>
<evidence type="ECO:0000255" key="1">
    <source>
        <dbReference type="HAMAP-Rule" id="MF_01367"/>
    </source>
</evidence>
<evidence type="ECO:0000305" key="2"/>
<feature type="chain" id="PRO_1000166925" description="Large ribosomal subunit protein uL14">
    <location>
        <begin position="1"/>
        <end position="122"/>
    </location>
</feature>
<accession>C1DAS7</accession>
<keyword id="KW-1185">Reference proteome</keyword>
<keyword id="KW-0687">Ribonucleoprotein</keyword>
<keyword id="KW-0689">Ribosomal protein</keyword>
<keyword id="KW-0694">RNA-binding</keyword>
<keyword id="KW-0699">rRNA-binding</keyword>
<dbReference type="EMBL" id="CP001154">
    <property type="protein sequence ID" value="ACO73258.1"/>
    <property type="molecule type" value="Genomic_DNA"/>
</dbReference>
<dbReference type="RefSeq" id="WP_012695752.1">
    <property type="nucleotide sequence ID" value="NC_012559.1"/>
</dbReference>
<dbReference type="SMR" id="C1DAS7"/>
<dbReference type="STRING" id="557598.LHK_00263"/>
<dbReference type="GeneID" id="75109497"/>
<dbReference type="KEGG" id="lhk:LHK_00263"/>
<dbReference type="eggNOG" id="COG0093">
    <property type="taxonomic scope" value="Bacteria"/>
</dbReference>
<dbReference type="HOGENOM" id="CLU_095071_2_1_4"/>
<dbReference type="Proteomes" id="UP000002010">
    <property type="component" value="Chromosome"/>
</dbReference>
<dbReference type="GO" id="GO:0022625">
    <property type="term" value="C:cytosolic large ribosomal subunit"/>
    <property type="evidence" value="ECO:0007669"/>
    <property type="project" value="TreeGrafter"/>
</dbReference>
<dbReference type="GO" id="GO:0070180">
    <property type="term" value="F:large ribosomal subunit rRNA binding"/>
    <property type="evidence" value="ECO:0007669"/>
    <property type="project" value="TreeGrafter"/>
</dbReference>
<dbReference type="GO" id="GO:0003735">
    <property type="term" value="F:structural constituent of ribosome"/>
    <property type="evidence" value="ECO:0007669"/>
    <property type="project" value="InterPro"/>
</dbReference>
<dbReference type="GO" id="GO:0006412">
    <property type="term" value="P:translation"/>
    <property type="evidence" value="ECO:0007669"/>
    <property type="project" value="UniProtKB-UniRule"/>
</dbReference>
<dbReference type="CDD" id="cd00337">
    <property type="entry name" value="Ribosomal_uL14"/>
    <property type="match status" value="1"/>
</dbReference>
<dbReference type="FunFam" id="2.40.150.20:FF:000001">
    <property type="entry name" value="50S ribosomal protein L14"/>
    <property type="match status" value="1"/>
</dbReference>
<dbReference type="Gene3D" id="2.40.150.20">
    <property type="entry name" value="Ribosomal protein L14"/>
    <property type="match status" value="1"/>
</dbReference>
<dbReference type="HAMAP" id="MF_01367">
    <property type="entry name" value="Ribosomal_uL14"/>
    <property type="match status" value="1"/>
</dbReference>
<dbReference type="InterPro" id="IPR000218">
    <property type="entry name" value="Ribosomal_uL14"/>
</dbReference>
<dbReference type="InterPro" id="IPR005745">
    <property type="entry name" value="Ribosomal_uL14_bac-type"/>
</dbReference>
<dbReference type="InterPro" id="IPR019972">
    <property type="entry name" value="Ribosomal_uL14_CS"/>
</dbReference>
<dbReference type="InterPro" id="IPR036853">
    <property type="entry name" value="Ribosomal_uL14_sf"/>
</dbReference>
<dbReference type="NCBIfam" id="TIGR01067">
    <property type="entry name" value="rplN_bact"/>
    <property type="match status" value="1"/>
</dbReference>
<dbReference type="PANTHER" id="PTHR11761">
    <property type="entry name" value="50S/60S RIBOSOMAL PROTEIN L14/L23"/>
    <property type="match status" value="1"/>
</dbReference>
<dbReference type="PANTHER" id="PTHR11761:SF3">
    <property type="entry name" value="LARGE RIBOSOMAL SUBUNIT PROTEIN UL14M"/>
    <property type="match status" value="1"/>
</dbReference>
<dbReference type="Pfam" id="PF00238">
    <property type="entry name" value="Ribosomal_L14"/>
    <property type="match status" value="1"/>
</dbReference>
<dbReference type="SMART" id="SM01374">
    <property type="entry name" value="Ribosomal_L14"/>
    <property type="match status" value="1"/>
</dbReference>
<dbReference type="SUPFAM" id="SSF50193">
    <property type="entry name" value="Ribosomal protein L14"/>
    <property type="match status" value="1"/>
</dbReference>
<dbReference type="PROSITE" id="PS00049">
    <property type="entry name" value="RIBOSOMAL_L14"/>
    <property type="match status" value="1"/>
</dbReference>
<proteinExistence type="inferred from homology"/>
<name>RL14_LARHH</name>
<comment type="function">
    <text evidence="1">Binds to 23S rRNA. Forms part of two intersubunit bridges in the 70S ribosome.</text>
</comment>
<comment type="subunit">
    <text evidence="1">Part of the 50S ribosomal subunit. Forms a cluster with proteins L3 and L19. In the 70S ribosome, L14 and L19 interact and together make contacts with the 16S rRNA in bridges B5 and B8.</text>
</comment>
<comment type="similarity">
    <text evidence="1">Belongs to the universal ribosomal protein uL14 family.</text>
</comment>